<dbReference type="EMBL" id="CP001234">
    <property type="protein sequence ID" value="ACP07265.1"/>
    <property type="molecule type" value="Genomic_DNA"/>
</dbReference>
<dbReference type="RefSeq" id="WP_001885060.1">
    <property type="nucleotide sequence ID" value="NC_012580.1"/>
</dbReference>
<dbReference type="SMR" id="C3LUW0"/>
<dbReference type="GeneID" id="94015622"/>
<dbReference type="KEGG" id="vcm:VCM66_A0288"/>
<dbReference type="HOGENOM" id="CLU_169643_4_3_6"/>
<dbReference type="Proteomes" id="UP000001217">
    <property type="component" value="Chromosome II"/>
</dbReference>
<dbReference type="GO" id="GO:0022625">
    <property type="term" value="C:cytosolic large ribosomal subunit"/>
    <property type="evidence" value="ECO:0007669"/>
    <property type="project" value="TreeGrafter"/>
</dbReference>
<dbReference type="GO" id="GO:0003735">
    <property type="term" value="F:structural constituent of ribosome"/>
    <property type="evidence" value="ECO:0007669"/>
    <property type="project" value="InterPro"/>
</dbReference>
<dbReference type="GO" id="GO:0006412">
    <property type="term" value="P:translation"/>
    <property type="evidence" value="ECO:0007669"/>
    <property type="project" value="UniProtKB-UniRule"/>
</dbReference>
<dbReference type="FunFam" id="4.10.410.60:FF:000001">
    <property type="entry name" value="50S ribosomal protein L35"/>
    <property type="match status" value="1"/>
</dbReference>
<dbReference type="Gene3D" id="4.10.410.60">
    <property type="match status" value="1"/>
</dbReference>
<dbReference type="HAMAP" id="MF_00514">
    <property type="entry name" value="Ribosomal_bL35"/>
    <property type="match status" value="1"/>
</dbReference>
<dbReference type="InterPro" id="IPR001706">
    <property type="entry name" value="Ribosomal_bL35"/>
</dbReference>
<dbReference type="InterPro" id="IPR021137">
    <property type="entry name" value="Ribosomal_bL35-like"/>
</dbReference>
<dbReference type="InterPro" id="IPR018265">
    <property type="entry name" value="Ribosomal_bL35_CS"/>
</dbReference>
<dbReference type="InterPro" id="IPR037229">
    <property type="entry name" value="Ribosomal_bL35_sf"/>
</dbReference>
<dbReference type="NCBIfam" id="TIGR00001">
    <property type="entry name" value="rpmI_bact"/>
    <property type="match status" value="1"/>
</dbReference>
<dbReference type="PANTHER" id="PTHR33343">
    <property type="entry name" value="54S RIBOSOMAL PROTEIN BL35M"/>
    <property type="match status" value="1"/>
</dbReference>
<dbReference type="PANTHER" id="PTHR33343:SF1">
    <property type="entry name" value="LARGE RIBOSOMAL SUBUNIT PROTEIN BL35M"/>
    <property type="match status" value="1"/>
</dbReference>
<dbReference type="Pfam" id="PF01632">
    <property type="entry name" value="Ribosomal_L35p"/>
    <property type="match status" value="1"/>
</dbReference>
<dbReference type="PRINTS" id="PR00064">
    <property type="entry name" value="RIBOSOMALL35"/>
</dbReference>
<dbReference type="SUPFAM" id="SSF143034">
    <property type="entry name" value="L35p-like"/>
    <property type="match status" value="1"/>
</dbReference>
<dbReference type="PROSITE" id="PS00936">
    <property type="entry name" value="RIBOSOMAL_L35"/>
    <property type="match status" value="1"/>
</dbReference>
<keyword id="KW-0687">Ribonucleoprotein</keyword>
<keyword id="KW-0689">Ribosomal protein</keyword>
<comment type="similarity">
    <text evidence="1">Belongs to the bacterial ribosomal protein bL35 family.</text>
</comment>
<sequence>MPKMKNNKGAAKRFKKTAGGIKYKHATKRHILTKRTTKNKRQLRPNAILPKCELAAVARMLPYA</sequence>
<name>RL35_VIBCM</name>
<proteinExistence type="inferred from homology"/>
<accession>C3LUW0</accession>
<protein>
    <recommendedName>
        <fullName evidence="1">Large ribosomal subunit protein bL35</fullName>
    </recommendedName>
    <alternativeName>
        <fullName evidence="2">50S ribosomal protein L35</fullName>
    </alternativeName>
</protein>
<feature type="chain" id="PRO_1000194090" description="Large ribosomal subunit protein bL35">
    <location>
        <begin position="1"/>
        <end position="64"/>
    </location>
</feature>
<organism>
    <name type="scientific">Vibrio cholerae serotype O1 (strain M66-2)</name>
    <dbReference type="NCBI Taxonomy" id="579112"/>
    <lineage>
        <taxon>Bacteria</taxon>
        <taxon>Pseudomonadati</taxon>
        <taxon>Pseudomonadota</taxon>
        <taxon>Gammaproteobacteria</taxon>
        <taxon>Vibrionales</taxon>
        <taxon>Vibrionaceae</taxon>
        <taxon>Vibrio</taxon>
    </lineage>
</organism>
<reference key="1">
    <citation type="journal article" date="2008" name="PLoS ONE">
        <title>A recalibrated molecular clock and independent origins for the cholera pandemic clones.</title>
        <authorList>
            <person name="Feng L."/>
            <person name="Reeves P.R."/>
            <person name="Lan R."/>
            <person name="Ren Y."/>
            <person name="Gao C."/>
            <person name="Zhou Z."/>
            <person name="Ren Y."/>
            <person name="Cheng J."/>
            <person name="Wang W."/>
            <person name="Wang J."/>
            <person name="Qian W."/>
            <person name="Li D."/>
            <person name="Wang L."/>
        </authorList>
    </citation>
    <scope>NUCLEOTIDE SEQUENCE [LARGE SCALE GENOMIC DNA]</scope>
    <source>
        <strain>M66-2</strain>
    </source>
</reference>
<gene>
    <name evidence="1" type="primary">rpmI</name>
    <name type="ordered locus">VCM66_A0288</name>
</gene>
<evidence type="ECO:0000255" key="1">
    <source>
        <dbReference type="HAMAP-Rule" id="MF_00514"/>
    </source>
</evidence>
<evidence type="ECO:0000305" key="2"/>